<sequence length="1072" mass="122984">MSESNAHFSFPKEEEKVLSLWDEIDAFHTSLELTKDKPEFSFFDGPPFATGTPHYGHILASTIKDIVPRYATMTGHHVERRFGWDTHGVPIEHIIDKKLGITGKDDVFKYGLENYNNECRSIVMTYASDWRKTIGRLGRWIDFDNDYKTMYPSFMESTWWAFKQLHEKGQVYRGFKVMPYSTGLTTPLSNFEAQQNYKDVNDPAVTIGFNVIGQEKTQLVAWTTTPWTLPSNLSLCVNADFEYVKIYDETRDRYFILLESLIKTLYKKPKNEKYKIVEKIKGSDLVGLKYEPLFPYFAEQFHETAFRVISDDYVTSDSGTGIVHNAPAFGEEDNAACLKNGVISEDSVLPNAIDDLGRFTKDVPDFEGVYVKDADKLIIKYLTNTGNLLLASQIRHSYPFCWRSDTPLLYRSVPAWFVRVKNIVPQMLDSVMKSHWVPNTIKEKRFANWIANARDWNVSRNRYWGTPIPLWVSDDFEEVVCVGSIKELEELTGVRNITDLHRDVIDKLTIPSKQGKGDLKRIEEVFDCWFESGSMPYASQHYPFENTEKFDERVPANFISEGLDQTRGWFYTLAVLGTHLFGSVPYKNVIVSGIVLAADGRKMSKSLKNYPDPSIVLNKYGADALRLYLINSPVLKAESLKFKEEGVKEVVSKVLLPWWNSFKFLDGQIALLKKMSNIDFQYDDSVKSDNVMDRWILASMQSLVQFIHEEMGQYKLYTVVPKLLNFIDELTNWYIRFNRRRLKGENGVEDCLKALNSLFDALFTFVRAMAPFTPFLSESIYLRLKEYIPEAVLAKYGKDGRSVHFLSYPVVKKEYFDEAIETAVSRMQSVIDLGRNIREKKTISLKTPLKTLVILHSDESYLKDVEALKNYIIEELNVRDVVITSDEAKYGVEYKAVADWPVLGKKLKKDAKKVKDALPSVTSEQVREYLESGKLEVAGIELVKGDLNAIRGLPESAVQAGQETRTDQDVLIIMDTNIYSELKSEGLARELVNRIQKLRKKCGLEATDDVLVEYELVKDTIDFEAIVKEHFDMLSKTCRSDIAKYDGSKTDPIGDEEQSINDTIFKLKVFKL</sequence>
<comment type="catalytic activity">
    <reaction>
        <text>tRNA(Ile) + L-isoleucine + ATP = L-isoleucyl-tRNA(Ile) + AMP + diphosphate</text>
        <dbReference type="Rhea" id="RHEA:11060"/>
        <dbReference type="Rhea" id="RHEA-COMP:9666"/>
        <dbReference type="Rhea" id="RHEA-COMP:9695"/>
        <dbReference type="ChEBI" id="CHEBI:30616"/>
        <dbReference type="ChEBI" id="CHEBI:33019"/>
        <dbReference type="ChEBI" id="CHEBI:58045"/>
        <dbReference type="ChEBI" id="CHEBI:78442"/>
        <dbReference type="ChEBI" id="CHEBI:78528"/>
        <dbReference type="ChEBI" id="CHEBI:456215"/>
        <dbReference type="EC" id="6.1.1.5"/>
    </reaction>
</comment>
<comment type="subcellular location">
    <subcellularLocation>
        <location>Cytoplasm</location>
    </subcellularLocation>
</comment>
<comment type="miscellaneous">
    <text evidence="2">Present with 23300 molecules/cell in log phase SD medium.</text>
</comment>
<comment type="similarity">
    <text evidence="3">Belongs to the class-I aminoacyl-tRNA synthetase family.</text>
</comment>
<gene>
    <name type="primary">ILS1</name>
    <name type="ordered locus">YBL076C</name>
    <name type="ORF">YBL0734</name>
</gene>
<keyword id="KW-0002">3D-structure</keyword>
<keyword id="KW-0030">Aminoacyl-tRNA synthetase</keyword>
<keyword id="KW-0067">ATP-binding</keyword>
<keyword id="KW-0963">Cytoplasm</keyword>
<keyword id="KW-0903">Direct protein sequencing</keyword>
<keyword id="KW-1017">Isopeptide bond</keyword>
<keyword id="KW-0436">Ligase</keyword>
<keyword id="KW-0547">Nucleotide-binding</keyword>
<keyword id="KW-0597">Phosphoprotein</keyword>
<keyword id="KW-0648">Protein biosynthesis</keyword>
<keyword id="KW-1185">Reference proteome</keyword>
<keyword id="KW-0832">Ubl conjugation</keyword>
<accession>P09436</accession>
<accession>D6VPS6</accession>
<proteinExistence type="evidence at protein level"/>
<evidence type="ECO:0000250" key="1"/>
<evidence type="ECO:0000269" key="2">
    <source>
    </source>
</evidence>
<evidence type="ECO:0000305" key="3"/>
<evidence type="ECO:0007744" key="4">
    <source>
    </source>
</evidence>
<evidence type="ECO:0007744" key="5">
    <source>
    </source>
</evidence>
<evidence type="ECO:0007744" key="6">
    <source>
    </source>
</evidence>
<evidence type="ECO:0007829" key="7">
    <source>
        <dbReference type="PDB" id="7D5C"/>
    </source>
</evidence>
<evidence type="ECO:0007829" key="8">
    <source>
        <dbReference type="PDB" id="8WND"/>
    </source>
</evidence>
<reference key="1">
    <citation type="journal article" date="1989" name="Curr. Genet.">
        <title>Isolation and complete sequence of the yeast isoleucyl-tRNA synthetase gene (ILS1).</title>
        <authorList>
            <person name="Martindale D.W."/>
            <person name="Gu Z.M."/>
            <person name="Csank C."/>
        </authorList>
    </citation>
    <scope>NUCLEOTIDE SEQUENCE [GENOMIC DNA]</scope>
    <source>
        <strain>ATCC 204626 / S288c / A364A</strain>
    </source>
</reference>
<reference key="2">
    <citation type="journal article" date="1987" name="Biol. Chem. Hoppe-Seyler">
        <title>Structure of the yeast isoleucyl-tRNA synthetase gene (ILS1). DNA-sequence, amino-acid sequence of proteolytic peptides of the enzyme and comparison of the structure to those of other known aminoacyl-tRNA synthetases.</title>
        <authorList>
            <person name="Englisch U."/>
            <person name="Englisch E."/>
            <person name="Markmeyer P."/>
            <person name="Schischkoff J."/>
            <person name="Sternbach H."/>
            <person name="Kratzin H."/>
            <person name="Cramer F."/>
        </authorList>
    </citation>
    <scope>NUCLEOTIDE SEQUENCE [GENOMIC DNA]</scope>
    <scope>PARTIAL PROTEIN SEQUENCE</scope>
    <source>
        <strain>ATCC 204508 / S288c</strain>
    </source>
</reference>
<reference key="3">
    <citation type="journal article" date="1995" name="Yeast">
        <title>Sequence analysis of a 78.6 kb segment of the left end of Saccharomyces cerevisiae chromosome II.</title>
        <authorList>
            <person name="Obermaier B."/>
            <person name="Gassenhuber J."/>
            <person name="Piravandi E."/>
            <person name="Domdey H."/>
        </authorList>
    </citation>
    <scope>NUCLEOTIDE SEQUENCE [GENOMIC DNA]</scope>
    <source>
        <strain>ATCC 204508 / S288c</strain>
    </source>
</reference>
<reference key="4">
    <citation type="journal article" date="1994" name="EMBO J.">
        <title>Complete DNA sequence of yeast chromosome II.</title>
        <authorList>
            <person name="Feldmann H."/>
            <person name="Aigle M."/>
            <person name="Aljinovic G."/>
            <person name="Andre B."/>
            <person name="Baclet M.C."/>
            <person name="Barthe C."/>
            <person name="Baur A."/>
            <person name="Becam A.-M."/>
            <person name="Biteau N."/>
            <person name="Boles E."/>
            <person name="Brandt T."/>
            <person name="Brendel M."/>
            <person name="Brueckner M."/>
            <person name="Bussereau F."/>
            <person name="Christiansen C."/>
            <person name="Contreras R."/>
            <person name="Crouzet M."/>
            <person name="Cziepluch C."/>
            <person name="Demolis N."/>
            <person name="Delaveau T."/>
            <person name="Doignon F."/>
            <person name="Domdey H."/>
            <person name="Duesterhus S."/>
            <person name="Dubois E."/>
            <person name="Dujon B."/>
            <person name="El Bakkoury M."/>
            <person name="Entian K.-D."/>
            <person name="Feuermann M."/>
            <person name="Fiers W."/>
            <person name="Fobo G.M."/>
            <person name="Fritz C."/>
            <person name="Gassenhuber J."/>
            <person name="Glansdorff N."/>
            <person name="Goffeau A."/>
            <person name="Grivell L.A."/>
            <person name="de Haan M."/>
            <person name="Hein C."/>
            <person name="Herbert C.J."/>
            <person name="Hollenberg C.P."/>
            <person name="Holmstroem K."/>
            <person name="Jacq C."/>
            <person name="Jacquet M."/>
            <person name="Jauniaux J.-C."/>
            <person name="Jonniaux J.-L."/>
            <person name="Kallesoee T."/>
            <person name="Kiesau P."/>
            <person name="Kirchrath L."/>
            <person name="Koetter P."/>
            <person name="Korol S."/>
            <person name="Liebl S."/>
            <person name="Logghe M."/>
            <person name="Lohan A.J.E."/>
            <person name="Louis E.J."/>
            <person name="Li Z.Y."/>
            <person name="Maat M.J."/>
            <person name="Mallet L."/>
            <person name="Mannhaupt G."/>
            <person name="Messenguy F."/>
            <person name="Miosga T."/>
            <person name="Molemans F."/>
            <person name="Mueller S."/>
            <person name="Nasr F."/>
            <person name="Obermaier B."/>
            <person name="Perea J."/>
            <person name="Pierard A."/>
            <person name="Piravandi E."/>
            <person name="Pohl F.M."/>
            <person name="Pohl T.M."/>
            <person name="Potier S."/>
            <person name="Proft M."/>
            <person name="Purnelle B."/>
            <person name="Ramezani Rad M."/>
            <person name="Rieger M."/>
            <person name="Rose M."/>
            <person name="Schaaff-Gerstenschlaeger I."/>
            <person name="Scherens B."/>
            <person name="Schwarzlose C."/>
            <person name="Skala J."/>
            <person name="Slonimski P.P."/>
            <person name="Smits P.H.M."/>
            <person name="Souciet J.-L."/>
            <person name="Steensma H.Y."/>
            <person name="Stucka R."/>
            <person name="Urrestarazu L.A."/>
            <person name="van der Aart Q.J.M."/>
            <person name="Van Dyck L."/>
            <person name="Vassarotti A."/>
            <person name="Vetter I."/>
            <person name="Vierendeels F."/>
            <person name="Vissers S."/>
            <person name="Wagner G."/>
            <person name="de Wergifosse P."/>
            <person name="Wolfe K.H."/>
            <person name="Zagulski M."/>
            <person name="Zimmermann F.K."/>
            <person name="Mewes H.-W."/>
            <person name="Kleine K."/>
        </authorList>
    </citation>
    <scope>NUCLEOTIDE SEQUENCE [LARGE SCALE GENOMIC DNA]</scope>
    <source>
        <strain>ATCC 204508 / S288c</strain>
    </source>
</reference>
<reference key="5">
    <citation type="journal article" date="2014" name="G3 (Bethesda)">
        <title>The reference genome sequence of Saccharomyces cerevisiae: Then and now.</title>
        <authorList>
            <person name="Engel S.R."/>
            <person name="Dietrich F.S."/>
            <person name="Fisk D.G."/>
            <person name="Binkley G."/>
            <person name="Balakrishnan R."/>
            <person name="Costanzo M.C."/>
            <person name="Dwight S.S."/>
            <person name="Hitz B.C."/>
            <person name="Karra K."/>
            <person name="Nash R.S."/>
            <person name="Weng S."/>
            <person name="Wong E.D."/>
            <person name="Lloyd P."/>
            <person name="Skrzypek M.S."/>
            <person name="Miyasato S.R."/>
            <person name="Simison M."/>
            <person name="Cherry J.M."/>
        </authorList>
    </citation>
    <scope>GENOME REANNOTATION</scope>
    <source>
        <strain>ATCC 204508 / S288c</strain>
    </source>
</reference>
<reference key="6">
    <citation type="journal article" date="2003" name="Nature">
        <title>Global analysis of protein expression in yeast.</title>
        <authorList>
            <person name="Ghaemmaghami S."/>
            <person name="Huh W.-K."/>
            <person name="Bower K."/>
            <person name="Howson R.W."/>
            <person name="Belle A."/>
            <person name="Dephoure N."/>
            <person name="O'Shea E.K."/>
            <person name="Weissman J.S."/>
        </authorList>
    </citation>
    <scope>LEVEL OF PROTEIN EXPRESSION [LARGE SCALE ANALYSIS]</scope>
</reference>
<reference key="7">
    <citation type="journal article" date="2008" name="Mol. Cell. Proteomics">
        <title>A multidimensional chromatography technology for in-depth phosphoproteome analysis.</title>
        <authorList>
            <person name="Albuquerque C.P."/>
            <person name="Smolka M.B."/>
            <person name="Payne S.H."/>
            <person name="Bafna V."/>
            <person name="Eng J."/>
            <person name="Zhou H."/>
        </authorList>
    </citation>
    <scope>PHOSPHORYLATION [LARGE SCALE ANALYSIS] AT SER-829 AND SER-1059</scope>
    <scope>IDENTIFICATION BY MASS SPECTROMETRY [LARGE SCALE ANALYSIS]</scope>
</reference>
<reference key="8">
    <citation type="journal article" date="2009" name="Science">
        <title>Global analysis of Cdk1 substrate phosphorylation sites provides insights into evolution.</title>
        <authorList>
            <person name="Holt L.J."/>
            <person name="Tuch B.B."/>
            <person name="Villen J."/>
            <person name="Johnson A.D."/>
            <person name="Gygi S.P."/>
            <person name="Morgan D.O."/>
        </authorList>
    </citation>
    <scope>PHOSPHORYLATION [LARGE SCALE ANALYSIS] AT SER-1059</scope>
    <scope>IDENTIFICATION BY MASS SPECTROMETRY [LARGE SCALE ANALYSIS]</scope>
</reference>
<reference key="9">
    <citation type="journal article" date="2012" name="Proteomics">
        <title>Sites of ubiquitin attachment in Saccharomyces cerevisiae.</title>
        <authorList>
            <person name="Starita L.M."/>
            <person name="Lo R.S."/>
            <person name="Eng J.K."/>
            <person name="von Haller P.D."/>
            <person name="Fields S."/>
        </authorList>
    </citation>
    <scope>UBIQUITINATION [LARGE SCALE ANALYSIS] AT LYS-486</scope>
    <scope>IDENTIFICATION BY MASS SPECTROMETRY [LARGE SCALE ANALYSIS]</scope>
</reference>
<dbReference type="EC" id="6.1.1.5"/>
<dbReference type="EMBL" id="X07886">
    <property type="protein sequence ID" value="CAA30733.1"/>
    <property type="molecule type" value="Genomic_DNA"/>
</dbReference>
<dbReference type="EMBL" id="M19992">
    <property type="protein sequence ID" value="AAA34712.1"/>
    <property type="molecule type" value="Genomic_DNA"/>
</dbReference>
<dbReference type="EMBL" id="X79489">
    <property type="protein sequence ID" value="CAA56034.1"/>
    <property type="molecule type" value="Genomic_DNA"/>
</dbReference>
<dbReference type="EMBL" id="Z35838">
    <property type="protein sequence ID" value="CAA84898.1"/>
    <property type="molecule type" value="Genomic_DNA"/>
</dbReference>
<dbReference type="EMBL" id="BK006936">
    <property type="protein sequence ID" value="DAA07046.1"/>
    <property type="molecule type" value="Genomic_DNA"/>
</dbReference>
<dbReference type="PIR" id="S14459">
    <property type="entry name" value="SYBYI4"/>
</dbReference>
<dbReference type="RefSeq" id="NP_009477.1">
    <property type="nucleotide sequence ID" value="NM_001178316.1"/>
</dbReference>
<dbReference type="PDB" id="7D5C">
    <property type="method" value="X-ray"/>
    <property type="resolution" value="1.90 A"/>
    <property type="chains" value="A=1-984"/>
</dbReference>
<dbReference type="PDB" id="8WND">
    <property type="method" value="X-ray"/>
    <property type="resolution" value="2.80 A"/>
    <property type="chains" value="A/B=1-1072"/>
</dbReference>
<dbReference type="PDB" id="8Z1P">
    <property type="method" value="X-ray"/>
    <property type="resolution" value="2.83 A"/>
    <property type="chains" value="A=1-1072"/>
</dbReference>
<dbReference type="PDBsum" id="7D5C"/>
<dbReference type="PDBsum" id="8WND"/>
<dbReference type="PDBsum" id="8Z1P"/>
<dbReference type="SMR" id="P09436"/>
<dbReference type="BioGRID" id="32626">
    <property type="interactions" value="246"/>
</dbReference>
<dbReference type="DIP" id="DIP-6388N"/>
<dbReference type="FunCoup" id="P09436">
    <property type="interactions" value="1384"/>
</dbReference>
<dbReference type="IntAct" id="P09436">
    <property type="interactions" value="47"/>
</dbReference>
<dbReference type="MINT" id="P09436"/>
<dbReference type="STRING" id="4932.YBL076C"/>
<dbReference type="CarbonylDB" id="P09436"/>
<dbReference type="GlyGen" id="P09436">
    <property type="glycosylation" value="2 sites, 1 O-linked glycan (2 sites)"/>
</dbReference>
<dbReference type="iPTMnet" id="P09436"/>
<dbReference type="PaxDb" id="4932-YBL076C"/>
<dbReference type="PeptideAtlas" id="P09436"/>
<dbReference type="EnsemblFungi" id="YBL076C_mRNA">
    <property type="protein sequence ID" value="YBL076C"/>
    <property type="gene ID" value="YBL076C"/>
</dbReference>
<dbReference type="GeneID" id="852202"/>
<dbReference type="KEGG" id="sce:YBL076C"/>
<dbReference type="AGR" id="SGD:S000000172"/>
<dbReference type="SGD" id="S000000172">
    <property type="gene designation" value="ILS1"/>
</dbReference>
<dbReference type="VEuPathDB" id="FungiDB:YBL076C"/>
<dbReference type="eggNOG" id="KOG0434">
    <property type="taxonomic scope" value="Eukaryota"/>
</dbReference>
<dbReference type="GeneTree" id="ENSGT00550000074921"/>
<dbReference type="HOGENOM" id="CLU_001493_1_1_1"/>
<dbReference type="InParanoid" id="P09436"/>
<dbReference type="OMA" id="EIIVIHK"/>
<dbReference type="OrthoDB" id="1706657at2759"/>
<dbReference type="BioCyc" id="YEAST:G3O-28968-MONOMER"/>
<dbReference type="BRENDA" id="6.1.1.5">
    <property type="organism ID" value="984"/>
</dbReference>
<dbReference type="BioGRID-ORCS" id="852202">
    <property type="hits" value="1 hit in 10 CRISPR screens"/>
</dbReference>
<dbReference type="PRO" id="PR:P09436"/>
<dbReference type="Proteomes" id="UP000002311">
    <property type="component" value="Chromosome II"/>
</dbReference>
<dbReference type="RNAct" id="P09436">
    <property type="molecule type" value="protein"/>
</dbReference>
<dbReference type="GO" id="GO:0005829">
    <property type="term" value="C:cytosol"/>
    <property type="evidence" value="ECO:0000314"/>
    <property type="project" value="SGD"/>
</dbReference>
<dbReference type="GO" id="GO:0002161">
    <property type="term" value="F:aminoacyl-tRNA deacylase activity"/>
    <property type="evidence" value="ECO:0007669"/>
    <property type="project" value="InterPro"/>
</dbReference>
<dbReference type="GO" id="GO:0005524">
    <property type="term" value="F:ATP binding"/>
    <property type="evidence" value="ECO:0007669"/>
    <property type="project" value="UniProtKB-KW"/>
</dbReference>
<dbReference type="GO" id="GO:0004822">
    <property type="term" value="F:isoleucine-tRNA ligase activity"/>
    <property type="evidence" value="ECO:0000314"/>
    <property type="project" value="SGD"/>
</dbReference>
<dbReference type="GO" id="GO:1990825">
    <property type="term" value="F:sequence-specific mRNA binding"/>
    <property type="evidence" value="ECO:0000314"/>
    <property type="project" value="SGD"/>
</dbReference>
<dbReference type="GO" id="GO:0000049">
    <property type="term" value="F:tRNA binding"/>
    <property type="evidence" value="ECO:0007669"/>
    <property type="project" value="InterPro"/>
</dbReference>
<dbReference type="GO" id="GO:0006428">
    <property type="term" value="P:isoleucyl-tRNA aminoacylation"/>
    <property type="evidence" value="ECO:0000314"/>
    <property type="project" value="SGD"/>
</dbReference>
<dbReference type="CDD" id="cd07961">
    <property type="entry name" value="Anticodon_Ia_Ile_ABEc"/>
    <property type="match status" value="1"/>
</dbReference>
<dbReference type="CDD" id="cd00818">
    <property type="entry name" value="IleRS_core"/>
    <property type="match status" value="1"/>
</dbReference>
<dbReference type="FunFam" id="1.10.730.10:FF:000004">
    <property type="entry name" value="Isoleucyl-tRNA synthetase, cytoplasmic"/>
    <property type="match status" value="1"/>
</dbReference>
<dbReference type="FunFam" id="3.40.50.620:FF:000023">
    <property type="entry name" value="Isoleucyl-tRNA synthetase,cytoplasmic"/>
    <property type="match status" value="1"/>
</dbReference>
<dbReference type="FunFam" id="3.40.50.620:FF:000050">
    <property type="entry name" value="Isoleucyl-tRNA synthetase,cytoplasmic"/>
    <property type="match status" value="1"/>
</dbReference>
<dbReference type="Gene3D" id="3.40.50.620">
    <property type="entry name" value="HUPs"/>
    <property type="match status" value="2"/>
</dbReference>
<dbReference type="Gene3D" id="1.10.730.10">
    <property type="entry name" value="Isoleucyl-tRNA Synthetase, Domain 1"/>
    <property type="match status" value="1"/>
</dbReference>
<dbReference type="HAMAP" id="MF_02003">
    <property type="entry name" value="Ile_tRNA_synth_type2"/>
    <property type="match status" value="1"/>
</dbReference>
<dbReference type="InterPro" id="IPR001412">
    <property type="entry name" value="aa-tRNA-synth_I_CS"/>
</dbReference>
<dbReference type="InterPro" id="IPR002300">
    <property type="entry name" value="aa-tRNA-synth_Ia"/>
</dbReference>
<dbReference type="InterPro" id="IPR033709">
    <property type="entry name" value="Anticodon_Ile_ABEc"/>
</dbReference>
<dbReference type="InterPro" id="IPR002301">
    <property type="entry name" value="Ile-tRNA-ligase"/>
</dbReference>
<dbReference type="InterPro" id="IPR023586">
    <property type="entry name" value="Ile-tRNA-ligase_type2"/>
</dbReference>
<dbReference type="InterPro" id="IPR013155">
    <property type="entry name" value="M/V/L/I-tRNA-synth_anticd-bd"/>
</dbReference>
<dbReference type="InterPro" id="IPR014729">
    <property type="entry name" value="Rossmann-like_a/b/a_fold"/>
</dbReference>
<dbReference type="InterPro" id="IPR009080">
    <property type="entry name" value="tRNAsynth_Ia_anticodon-bd"/>
</dbReference>
<dbReference type="InterPro" id="IPR009008">
    <property type="entry name" value="Val/Leu/Ile-tRNA-synth_edit"/>
</dbReference>
<dbReference type="NCBIfam" id="TIGR00392">
    <property type="entry name" value="ileS"/>
    <property type="match status" value="1"/>
</dbReference>
<dbReference type="PANTHER" id="PTHR42780:SF1">
    <property type="entry name" value="ISOLEUCINE--TRNA LIGASE, CYTOPLASMIC"/>
    <property type="match status" value="1"/>
</dbReference>
<dbReference type="PANTHER" id="PTHR42780">
    <property type="entry name" value="SOLEUCYL-TRNA SYNTHETASE"/>
    <property type="match status" value="1"/>
</dbReference>
<dbReference type="Pfam" id="PF08264">
    <property type="entry name" value="Anticodon_1"/>
    <property type="match status" value="1"/>
</dbReference>
<dbReference type="Pfam" id="PF19302">
    <property type="entry name" value="DUF5915"/>
    <property type="match status" value="1"/>
</dbReference>
<dbReference type="Pfam" id="PF00133">
    <property type="entry name" value="tRNA-synt_1"/>
    <property type="match status" value="1"/>
</dbReference>
<dbReference type="PRINTS" id="PR00984">
    <property type="entry name" value="TRNASYNTHILE"/>
</dbReference>
<dbReference type="SUPFAM" id="SSF47323">
    <property type="entry name" value="Anticodon-binding domain of a subclass of class I aminoacyl-tRNA synthetases"/>
    <property type="match status" value="1"/>
</dbReference>
<dbReference type="SUPFAM" id="SSF52374">
    <property type="entry name" value="Nucleotidylyl transferase"/>
    <property type="match status" value="1"/>
</dbReference>
<dbReference type="SUPFAM" id="SSF50677">
    <property type="entry name" value="ValRS/IleRS/LeuRS editing domain"/>
    <property type="match status" value="1"/>
</dbReference>
<dbReference type="PROSITE" id="PS00178">
    <property type="entry name" value="AA_TRNA_LIGASE_I"/>
    <property type="match status" value="1"/>
</dbReference>
<organism>
    <name type="scientific">Saccharomyces cerevisiae (strain ATCC 204508 / S288c)</name>
    <name type="common">Baker's yeast</name>
    <dbReference type="NCBI Taxonomy" id="559292"/>
    <lineage>
        <taxon>Eukaryota</taxon>
        <taxon>Fungi</taxon>
        <taxon>Dikarya</taxon>
        <taxon>Ascomycota</taxon>
        <taxon>Saccharomycotina</taxon>
        <taxon>Saccharomycetes</taxon>
        <taxon>Saccharomycetales</taxon>
        <taxon>Saccharomycetaceae</taxon>
        <taxon>Saccharomyces</taxon>
    </lineage>
</organism>
<protein>
    <recommendedName>
        <fullName>Isoleucine--tRNA ligase, cytoplasmic</fullName>
        <ecNumber>6.1.1.5</ecNumber>
    </recommendedName>
    <alternativeName>
        <fullName>Isoleucyl-tRNA synthetase</fullName>
        <shortName>IleRS</shortName>
    </alternativeName>
</protein>
<feature type="chain" id="PRO_0000098604" description="Isoleucine--tRNA ligase, cytoplasmic">
    <location>
        <begin position="1"/>
        <end position="1072"/>
    </location>
</feature>
<feature type="short sequence motif" description="'HIGH' region">
    <location>
        <begin position="47"/>
        <end position="57"/>
    </location>
</feature>
<feature type="short sequence motif" description="'KMSKS' region">
    <location>
        <begin position="602"/>
        <end position="606"/>
    </location>
</feature>
<feature type="binding site" evidence="1">
    <location>
        <position position="605"/>
    </location>
    <ligand>
        <name>ATP</name>
        <dbReference type="ChEBI" id="CHEBI:30616"/>
    </ligand>
</feature>
<feature type="modified residue" description="Phosphoserine" evidence="4">
    <location>
        <position position="829"/>
    </location>
</feature>
<feature type="modified residue" description="Phosphoserine" evidence="4 5">
    <location>
        <position position="1059"/>
    </location>
</feature>
<feature type="cross-link" description="Glycyl lysine isopeptide (Lys-Gly) (interchain with G-Cter in ubiquitin)" evidence="6">
    <location>
        <position position="486"/>
    </location>
</feature>
<feature type="sequence conflict" description="In Ref. 2; AAA34712." evidence="3" ref="2">
    <original>D</original>
    <variation>E</variation>
    <location>
        <position position="551"/>
    </location>
</feature>
<feature type="sequence conflict" description="In Ref. 2; AA sequence." evidence="3" ref="2">
    <original>N</original>
    <variation>KS</variation>
    <location>
        <position position="588"/>
    </location>
</feature>
<feature type="sequence conflict" description="In Ref. 2; AAA34712." evidence="3" ref="2">
    <original>DRW</original>
    <variation>AEM</variation>
    <location>
        <begin position="693"/>
        <end position="695"/>
    </location>
</feature>
<feature type="sequence conflict" description="In Ref. 2; AAA34712." evidence="3" ref="2">
    <original>F</original>
    <variation>V</variation>
    <location>
        <position position="706"/>
    </location>
</feature>
<feature type="sequence conflict" description="In Ref. 2; AAA34712." evidence="3" ref="2">
    <original>G</original>
    <variation>V</variation>
    <location>
        <position position="747"/>
    </location>
</feature>
<feature type="helix" evidence="7">
    <location>
        <begin position="10"/>
        <end position="24"/>
    </location>
</feature>
<feature type="helix" evidence="7">
    <location>
        <begin position="26"/>
        <end position="33"/>
    </location>
</feature>
<feature type="turn" evidence="7">
    <location>
        <begin position="34"/>
        <end position="36"/>
    </location>
</feature>
<feature type="strand" evidence="7">
    <location>
        <begin position="48"/>
        <end position="51"/>
    </location>
</feature>
<feature type="helix" evidence="7">
    <location>
        <begin position="55"/>
        <end position="73"/>
    </location>
</feature>
<feature type="strand" evidence="7">
    <location>
        <begin position="81"/>
        <end position="85"/>
    </location>
</feature>
<feature type="helix" evidence="7">
    <location>
        <begin position="89"/>
        <end position="99"/>
    </location>
</feature>
<feature type="helix" evidence="7">
    <location>
        <begin position="106"/>
        <end position="110"/>
    </location>
</feature>
<feature type="helix" evidence="7">
    <location>
        <begin position="112"/>
        <end position="136"/>
    </location>
</feature>
<feature type="strand" evidence="7">
    <location>
        <begin position="142"/>
        <end position="148"/>
    </location>
</feature>
<feature type="helix" evidence="7">
    <location>
        <begin position="152"/>
        <end position="167"/>
    </location>
</feature>
<feature type="strand" evidence="7">
    <location>
        <begin position="171"/>
        <end position="181"/>
    </location>
</feature>
<feature type="turn" evidence="7">
    <location>
        <begin position="182"/>
        <end position="185"/>
    </location>
</feature>
<feature type="helix" evidence="7">
    <location>
        <begin position="190"/>
        <end position="193"/>
    </location>
</feature>
<feature type="strand" evidence="7">
    <location>
        <begin position="197"/>
        <end position="211"/>
    </location>
</feature>
<feature type="strand" evidence="7">
    <location>
        <begin position="214"/>
        <end position="224"/>
    </location>
</feature>
<feature type="helix" evidence="7">
    <location>
        <begin position="226"/>
        <end position="231"/>
    </location>
</feature>
<feature type="strand" evidence="7">
    <location>
        <begin position="234"/>
        <end position="237"/>
    </location>
</feature>
<feature type="strand" evidence="7">
    <location>
        <begin position="241"/>
        <end position="248"/>
    </location>
</feature>
<feature type="turn" evidence="7">
    <location>
        <begin position="249"/>
        <end position="252"/>
    </location>
</feature>
<feature type="strand" evidence="7">
    <location>
        <begin position="253"/>
        <end position="257"/>
    </location>
</feature>
<feature type="helix" evidence="7">
    <location>
        <begin position="259"/>
        <end position="264"/>
    </location>
</feature>
<feature type="helix" evidence="7">
    <location>
        <begin position="269"/>
        <end position="271"/>
    </location>
</feature>
<feature type="strand" evidence="7">
    <location>
        <begin position="274"/>
        <end position="281"/>
    </location>
</feature>
<feature type="helix" evidence="7">
    <location>
        <begin position="282"/>
        <end position="285"/>
    </location>
</feature>
<feature type="strand" evidence="7">
    <location>
        <begin position="293"/>
        <end position="295"/>
    </location>
</feature>
<feature type="helix" evidence="7">
    <location>
        <begin position="298"/>
        <end position="301"/>
    </location>
</feature>
<feature type="turn" evidence="7">
    <location>
        <begin position="302"/>
        <end position="304"/>
    </location>
</feature>
<feature type="strand" evidence="7">
    <location>
        <begin position="306"/>
        <end position="310"/>
    </location>
</feature>
<feature type="strand" evidence="7">
    <location>
        <begin position="316"/>
        <end position="318"/>
    </location>
</feature>
<feature type="strand" evidence="7">
    <location>
        <begin position="323"/>
        <end position="325"/>
    </location>
</feature>
<feature type="helix" evidence="7">
    <location>
        <begin position="331"/>
        <end position="339"/>
    </location>
</feature>
<feature type="strand" evidence="7">
    <location>
        <begin position="357"/>
        <end position="359"/>
    </location>
</feature>
<feature type="helix" evidence="7">
    <location>
        <begin position="364"/>
        <end position="366"/>
    </location>
</feature>
<feature type="helix" evidence="7">
    <location>
        <begin position="371"/>
        <end position="384"/>
    </location>
</feature>
<feature type="strand" evidence="7">
    <location>
        <begin position="388"/>
        <end position="400"/>
    </location>
</feature>
<feature type="turn" evidence="7">
    <location>
        <begin position="402"/>
        <end position="404"/>
    </location>
</feature>
<feature type="strand" evidence="7">
    <location>
        <begin position="409"/>
        <end position="418"/>
    </location>
</feature>
<feature type="helix" evidence="7">
    <location>
        <begin position="421"/>
        <end position="423"/>
    </location>
</feature>
<feature type="helix" evidence="7">
    <location>
        <begin position="424"/>
        <end position="433"/>
    </location>
</feature>
<feature type="strand" evidence="7">
    <location>
        <begin position="434"/>
        <end position="438"/>
    </location>
</feature>
<feature type="helix" evidence="7">
    <location>
        <begin position="439"/>
        <end position="443"/>
    </location>
</feature>
<feature type="helix" evidence="7">
    <location>
        <begin position="445"/>
        <end position="451"/>
    </location>
</feature>
<feature type="strand" evidence="8">
    <location>
        <begin position="459"/>
        <end position="461"/>
    </location>
</feature>
<feature type="strand" evidence="7">
    <location>
        <begin position="463"/>
        <end position="465"/>
    </location>
</feature>
<feature type="strand" evidence="7">
    <location>
        <begin position="470"/>
        <end position="472"/>
    </location>
</feature>
<feature type="strand" evidence="7">
    <location>
        <begin position="478"/>
        <end position="481"/>
    </location>
</feature>
<feature type="helix" evidence="7">
    <location>
        <begin position="485"/>
        <end position="492"/>
    </location>
</feature>
<feature type="helix" evidence="7">
    <location>
        <begin position="502"/>
        <end position="505"/>
    </location>
</feature>
<feature type="strand" evidence="7">
    <location>
        <begin position="509"/>
        <end position="511"/>
    </location>
</feature>
<feature type="strand" evidence="7">
    <location>
        <begin position="513"/>
        <end position="515"/>
    </location>
</feature>
<feature type="strand" evidence="7">
    <location>
        <begin position="518"/>
        <end position="521"/>
    </location>
</feature>
<feature type="helix" evidence="7">
    <location>
        <begin position="528"/>
        <end position="533"/>
    </location>
</feature>
<feature type="helix" evidence="7">
    <location>
        <begin position="535"/>
        <end position="538"/>
    </location>
</feature>
<feature type="turn" evidence="7">
    <location>
        <begin position="539"/>
        <end position="544"/>
    </location>
</feature>
<feature type="helix" evidence="7">
    <location>
        <begin position="547"/>
        <end position="553"/>
    </location>
</feature>
<feature type="strand" evidence="7">
    <location>
        <begin position="554"/>
        <end position="562"/>
    </location>
</feature>
<feature type="helix" evidence="7">
    <location>
        <begin position="563"/>
        <end position="567"/>
    </location>
</feature>
<feature type="helix" evidence="7">
    <location>
        <begin position="569"/>
        <end position="581"/>
    </location>
</feature>
<feature type="strand" evidence="7">
    <location>
        <begin position="585"/>
        <end position="592"/>
    </location>
</feature>
<feature type="strand" evidence="7">
    <location>
        <begin position="600"/>
        <end position="602"/>
    </location>
</feature>
<feature type="turn" evidence="7">
    <location>
        <begin position="605"/>
        <end position="608"/>
    </location>
</feature>
<feature type="helix" evidence="7">
    <location>
        <begin position="613"/>
        <end position="619"/>
    </location>
</feature>
<feature type="helix" evidence="7">
    <location>
        <begin position="622"/>
        <end position="630"/>
    </location>
</feature>
<feature type="helix" evidence="7">
    <location>
        <begin position="633"/>
        <end position="636"/>
    </location>
</feature>
<feature type="helix" evidence="7">
    <location>
        <begin position="644"/>
        <end position="653"/>
    </location>
</feature>
<feature type="helix" evidence="7">
    <location>
        <begin position="655"/>
        <end position="676"/>
    </location>
</feature>
<feature type="helix" evidence="7">
    <location>
        <begin position="691"/>
        <end position="712"/>
    </location>
</feature>
<feature type="helix" evidence="7">
    <location>
        <begin position="716"/>
        <end position="718"/>
    </location>
</feature>
<feature type="helix" evidence="7">
    <location>
        <begin position="719"/>
        <end position="732"/>
    </location>
</feature>
<feature type="helix" evidence="7">
    <location>
        <begin position="734"/>
        <end position="742"/>
    </location>
</feature>
<feature type="turn" evidence="7">
    <location>
        <begin position="743"/>
        <end position="746"/>
    </location>
</feature>
<feature type="helix" evidence="7">
    <location>
        <begin position="748"/>
        <end position="769"/>
    </location>
</feature>
<feature type="turn" evidence="7">
    <location>
        <begin position="770"/>
        <end position="772"/>
    </location>
</feature>
<feature type="helix" evidence="7">
    <location>
        <begin position="774"/>
        <end position="784"/>
    </location>
</feature>
<feature type="helix" evidence="7">
    <location>
        <begin position="785"/>
        <end position="787"/>
    </location>
</feature>
<feature type="helix" evidence="7">
    <location>
        <begin position="790"/>
        <end position="793"/>
    </location>
</feature>
<feature type="helix" evidence="7">
    <location>
        <begin position="794"/>
        <end position="796"/>
    </location>
</feature>
<feature type="helix" evidence="7">
    <location>
        <begin position="803"/>
        <end position="805"/>
    </location>
</feature>
<feature type="helix" evidence="7">
    <location>
        <begin position="813"/>
        <end position="815"/>
    </location>
</feature>
<feature type="helix" evidence="7">
    <location>
        <begin position="818"/>
        <end position="841"/>
    </location>
</feature>
<feature type="strand" evidence="7">
    <location>
        <begin position="849"/>
        <end position="855"/>
    </location>
</feature>
<feature type="helix" evidence="7">
    <location>
        <begin position="859"/>
        <end position="867"/>
    </location>
</feature>
<feature type="helix" evidence="7">
    <location>
        <begin position="869"/>
        <end position="875"/>
    </location>
</feature>
<feature type="strand" evidence="7">
    <location>
        <begin position="878"/>
        <end position="885"/>
    </location>
</feature>
<feature type="helix" evidence="7">
    <location>
        <begin position="888"/>
        <end position="890"/>
    </location>
</feature>
<feature type="strand" evidence="8">
    <location>
        <begin position="893"/>
        <end position="898"/>
    </location>
</feature>
<feature type="helix" evidence="8">
    <location>
        <begin position="900"/>
        <end position="907"/>
    </location>
</feature>
<feature type="helix" evidence="8">
    <location>
        <begin position="908"/>
        <end position="910"/>
    </location>
</feature>
<feature type="helix" evidence="8">
    <location>
        <begin position="911"/>
        <end position="917"/>
    </location>
</feature>
<feature type="helix" evidence="8">
    <location>
        <begin position="918"/>
        <end position="920"/>
    </location>
</feature>
<feature type="helix" evidence="8">
    <location>
        <begin position="923"/>
        <end position="932"/>
    </location>
</feature>
<feature type="strand" evidence="8">
    <location>
        <begin position="933"/>
        <end position="937"/>
    </location>
</feature>
<feature type="strand" evidence="8">
    <location>
        <begin position="940"/>
        <end position="943"/>
    </location>
</feature>
<feature type="strand" evidence="8">
    <location>
        <begin position="946"/>
        <end position="952"/>
    </location>
</feature>
<feature type="helix" evidence="7">
    <location>
        <begin position="955"/>
        <end position="959"/>
    </location>
</feature>
<feature type="strand" evidence="7">
    <location>
        <begin position="962"/>
        <end position="969"/>
    </location>
</feature>
<feature type="strand" evidence="7">
    <location>
        <begin position="971"/>
        <end position="975"/>
    </location>
</feature>
<feature type="helix" evidence="8">
    <location>
        <begin position="980"/>
        <end position="982"/>
    </location>
</feature>
<feature type="helix" evidence="8">
    <location>
        <begin position="983"/>
        <end position="1002"/>
    </location>
</feature>
<feature type="strand" evidence="8">
    <location>
        <begin position="1010"/>
        <end position="1018"/>
    </location>
</feature>
<feature type="helix" evidence="8">
    <location>
        <begin position="1023"/>
        <end position="1029"/>
    </location>
</feature>
<feature type="helix" evidence="8">
    <location>
        <begin position="1032"/>
        <end position="1038"/>
    </location>
</feature>
<feature type="strand" evidence="8">
    <location>
        <begin position="1042"/>
        <end position="1044"/>
    </location>
</feature>
<feature type="strand" evidence="8">
    <location>
        <begin position="1053"/>
        <end position="1060"/>
    </location>
</feature>
<feature type="strand" evidence="8">
    <location>
        <begin position="1063"/>
        <end position="1071"/>
    </location>
</feature>
<name>SYIC_YEAST</name>